<reference key="1">
    <citation type="journal article" date="2011" name="Proc. Natl. Acad. Sci. U.S.A.">
        <title>Genomic anatomy of Escherichia coli O157:H7 outbreaks.</title>
        <authorList>
            <person name="Eppinger M."/>
            <person name="Mammel M.K."/>
            <person name="Leclerc J.E."/>
            <person name="Ravel J."/>
            <person name="Cebula T.A."/>
        </authorList>
    </citation>
    <scope>NUCLEOTIDE SEQUENCE [LARGE SCALE GENOMIC DNA]</scope>
    <source>
        <strain>EC4115 / EHEC</strain>
    </source>
</reference>
<dbReference type="EC" id="2.4.2.9" evidence="1"/>
<dbReference type="EMBL" id="CP001164">
    <property type="protein sequence ID" value="ACI34803.1"/>
    <property type="molecule type" value="Genomic_DNA"/>
</dbReference>
<dbReference type="RefSeq" id="WP_001295473.1">
    <property type="nucleotide sequence ID" value="NC_011353.1"/>
</dbReference>
<dbReference type="SMR" id="B5Z035"/>
<dbReference type="GeneID" id="93774638"/>
<dbReference type="KEGG" id="ecf:ECH74115_3720"/>
<dbReference type="HOGENOM" id="CLU_067096_2_2_6"/>
<dbReference type="UniPathway" id="UPA00574">
    <property type="reaction ID" value="UER00636"/>
</dbReference>
<dbReference type="GO" id="GO:0005525">
    <property type="term" value="F:GTP binding"/>
    <property type="evidence" value="ECO:0007669"/>
    <property type="project" value="UniProtKB-KW"/>
</dbReference>
<dbReference type="GO" id="GO:0000287">
    <property type="term" value="F:magnesium ion binding"/>
    <property type="evidence" value="ECO:0007669"/>
    <property type="project" value="UniProtKB-UniRule"/>
</dbReference>
<dbReference type="GO" id="GO:0004845">
    <property type="term" value="F:uracil phosphoribosyltransferase activity"/>
    <property type="evidence" value="ECO:0007669"/>
    <property type="project" value="UniProtKB-UniRule"/>
</dbReference>
<dbReference type="GO" id="GO:0044206">
    <property type="term" value="P:UMP salvage"/>
    <property type="evidence" value="ECO:0007669"/>
    <property type="project" value="UniProtKB-UniRule"/>
</dbReference>
<dbReference type="GO" id="GO:0006223">
    <property type="term" value="P:uracil salvage"/>
    <property type="evidence" value="ECO:0007669"/>
    <property type="project" value="InterPro"/>
</dbReference>
<dbReference type="CDD" id="cd06223">
    <property type="entry name" value="PRTases_typeI"/>
    <property type="match status" value="1"/>
</dbReference>
<dbReference type="FunFam" id="3.40.50.2020:FF:000003">
    <property type="entry name" value="Uracil phosphoribosyltransferase"/>
    <property type="match status" value="1"/>
</dbReference>
<dbReference type="Gene3D" id="3.40.50.2020">
    <property type="match status" value="1"/>
</dbReference>
<dbReference type="HAMAP" id="MF_01218_B">
    <property type="entry name" value="Upp_B"/>
    <property type="match status" value="1"/>
</dbReference>
<dbReference type="InterPro" id="IPR000836">
    <property type="entry name" value="PRibTrfase_dom"/>
</dbReference>
<dbReference type="InterPro" id="IPR029057">
    <property type="entry name" value="PRTase-like"/>
</dbReference>
<dbReference type="InterPro" id="IPR034332">
    <property type="entry name" value="Upp_B"/>
</dbReference>
<dbReference type="InterPro" id="IPR050054">
    <property type="entry name" value="UPRTase/APRTase"/>
</dbReference>
<dbReference type="InterPro" id="IPR005765">
    <property type="entry name" value="Ura_phspho_trans"/>
</dbReference>
<dbReference type="NCBIfam" id="NF001097">
    <property type="entry name" value="PRK00129.1"/>
    <property type="match status" value="1"/>
</dbReference>
<dbReference type="NCBIfam" id="TIGR01091">
    <property type="entry name" value="upp"/>
    <property type="match status" value="1"/>
</dbReference>
<dbReference type="PANTHER" id="PTHR32315">
    <property type="entry name" value="ADENINE PHOSPHORIBOSYLTRANSFERASE"/>
    <property type="match status" value="1"/>
</dbReference>
<dbReference type="PANTHER" id="PTHR32315:SF4">
    <property type="entry name" value="URACIL PHOSPHORIBOSYLTRANSFERASE, CHLOROPLASTIC"/>
    <property type="match status" value="1"/>
</dbReference>
<dbReference type="Pfam" id="PF14681">
    <property type="entry name" value="UPRTase"/>
    <property type="match status" value="1"/>
</dbReference>
<dbReference type="SUPFAM" id="SSF53271">
    <property type="entry name" value="PRTase-like"/>
    <property type="match status" value="1"/>
</dbReference>
<gene>
    <name evidence="1" type="primary">upp</name>
    <name type="ordered locus">ECH74115_3720</name>
</gene>
<protein>
    <recommendedName>
        <fullName evidence="1">Uracil phosphoribosyltransferase</fullName>
        <ecNumber evidence="1">2.4.2.9</ecNumber>
    </recommendedName>
    <alternativeName>
        <fullName evidence="1">UMP pyrophosphorylase</fullName>
    </alternativeName>
    <alternativeName>
        <fullName evidence="1">UPRTase</fullName>
    </alternativeName>
</protein>
<proteinExistence type="inferred from homology"/>
<evidence type="ECO:0000255" key="1">
    <source>
        <dbReference type="HAMAP-Rule" id="MF_01218"/>
    </source>
</evidence>
<feature type="chain" id="PRO_1000139118" description="Uracil phosphoribosyltransferase">
    <location>
        <begin position="1"/>
        <end position="208"/>
    </location>
</feature>
<feature type="binding site" evidence="1">
    <location>
        <position position="78"/>
    </location>
    <ligand>
        <name>5-phospho-alpha-D-ribose 1-diphosphate</name>
        <dbReference type="ChEBI" id="CHEBI:58017"/>
    </ligand>
</feature>
<feature type="binding site" evidence="1">
    <location>
        <position position="103"/>
    </location>
    <ligand>
        <name>5-phospho-alpha-D-ribose 1-diphosphate</name>
        <dbReference type="ChEBI" id="CHEBI:58017"/>
    </ligand>
</feature>
<feature type="binding site" evidence="1">
    <location>
        <begin position="130"/>
        <end position="138"/>
    </location>
    <ligand>
        <name>5-phospho-alpha-D-ribose 1-diphosphate</name>
        <dbReference type="ChEBI" id="CHEBI:58017"/>
    </ligand>
</feature>
<feature type="binding site" evidence="1">
    <location>
        <position position="193"/>
    </location>
    <ligand>
        <name>uracil</name>
        <dbReference type="ChEBI" id="CHEBI:17568"/>
    </ligand>
</feature>
<feature type="binding site" evidence="1">
    <location>
        <begin position="198"/>
        <end position="200"/>
    </location>
    <ligand>
        <name>uracil</name>
        <dbReference type="ChEBI" id="CHEBI:17568"/>
    </ligand>
</feature>
<feature type="binding site" evidence="1">
    <location>
        <position position="199"/>
    </location>
    <ligand>
        <name>5-phospho-alpha-D-ribose 1-diphosphate</name>
        <dbReference type="ChEBI" id="CHEBI:58017"/>
    </ligand>
</feature>
<accession>B5Z035</accession>
<comment type="function">
    <text evidence="1">Catalyzes the conversion of uracil and 5-phospho-alpha-D-ribose 1-diphosphate (PRPP) to UMP and diphosphate.</text>
</comment>
<comment type="catalytic activity">
    <reaction evidence="1">
        <text>UMP + diphosphate = 5-phospho-alpha-D-ribose 1-diphosphate + uracil</text>
        <dbReference type="Rhea" id="RHEA:13017"/>
        <dbReference type="ChEBI" id="CHEBI:17568"/>
        <dbReference type="ChEBI" id="CHEBI:33019"/>
        <dbReference type="ChEBI" id="CHEBI:57865"/>
        <dbReference type="ChEBI" id="CHEBI:58017"/>
        <dbReference type="EC" id="2.4.2.9"/>
    </reaction>
</comment>
<comment type="cofactor">
    <cofactor evidence="1">
        <name>Mg(2+)</name>
        <dbReference type="ChEBI" id="CHEBI:18420"/>
    </cofactor>
    <text evidence="1">Binds 1 Mg(2+) ion per subunit. The magnesium is bound as Mg-PRPP.</text>
</comment>
<comment type="activity regulation">
    <text evidence="1">Allosterically activated by GTP.</text>
</comment>
<comment type="pathway">
    <text evidence="1">Pyrimidine metabolism; UMP biosynthesis via salvage pathway; UMP from uracil: step 1/1.</text>
</comment>
<comment type="similarity">
    <text evidence="1">Belongs to the UPRTase family.</text>
</comment>
<organism>
    <name type="scientific">Escherichia coli O157:H7 (strain EC4115 / EHEC)</name>
    <dbReference type="NCBI Taxonomy" id="444450"/>
    <lineage>
        <taxon>Bacteria</taxon>
        <taxon>Pseudomonadati</taxon>
        <taxon>Pseudomonadota</taxon>
        <taxon>Gammaproteobacteria</taxon>
        <taxon>Enterobacterales</taxon>
        <taxon>Enterobacteriaceae</taxon>
        <taxon>Escherichia</taxon>
    </lineage>
</organism>
<keyword id="KW-0021">Allosteric enzyme</keyword>
<keyword id="KW-0328">Glycosyltransferase</keyword>
<keyword id="KW-0342">GTP-binding</keyword>
<keyword id="KW-0460">Magnesium</keyword>
<keyword id="KW-0547">Nucleotide-binding</keyword>
<keyword id="KW-0808">Transferase</keyword>
<sequence>MKIVEVKHPLVKHKLGLMREQDISTKRFRELASEVGSLLTYEATADLETEKVTIEGWNGPVEIDQIKGKKITVVPILRAGLGMMDGVLENVPSARISVVGMYRNEETLEPVPYFQKLVSNIDERMALIVDPMLATGGSVIATIDLLKKAGCSSIKVLVLVAAPEGIAALEKAHPDVELYTASIDQGLNEHGYIIPGLGDAGDKIFGTK</sequence>
<name>UPP_ECO5E</name>